<organism>
    <name type="scientific">Escherichia coli O7:K1 (strain IAI39 / ExPEC)</name>
    <dbReference type="NCBI Taxonomy" id="585057"/>
    <lineage>
        <taxon>Bacteria</taxon>
        <taxon>Pseudomonadati</taxon>
        <taxon>Pseudomonadota</taxon>
        <taxon>Gammaproteobacteria</taxon>
        <taxon>Enterobacterales</taxon>
        <taxon>Enterobacteriaceae</taxon>
        <taxon>Escherichia</taxon>
    </lineage>
</organism>
<sequence length="372" mass="40944">MKYDLIIIGSGSVGAAAGYYATRAGLNVLMTDAHMPPHQHGSHHGDTRLIRHAYGEGEKYVPLVLRAQMLWDELSRHNEDDPIFVRSGVINLGPADSAFLANVAHSAEQWQLNVEKLDAQGIMARWPEIRVPDNYIGLFETDSGFLRSELAIKTWIQLAKEAGCAQLFNCPVTAIRHDDDGVTIETADGEYQAKKAIVCAGTWVKDLLPELPVQPVRKVFAWYQADGRYSVKNKFPAFTGELPNGDQYYGFPAENDALKIGKHNGGQIIHSADERVPFAEVVSDGSEAFPFLRNVLPGIGCCLYGAACTYDNSPDEDFIIDTLPAHDNTLLITGLSGHGFKFASVLGEIAADFAQDKKSDFDLTPFRLSRFQ</sequence>
<keyword id="KW-0274">FAD</keyword>
<keyword id="KW-0285">Flavoprotein</keyword>
<keyword id="KW-0560">Oxidoreductase</keyword>
<feature type="chain" id="PRO_1000127436" description="N-methyl-L-tryptophan oxidase">
    <location>
        <begin position="1"/>
        <end position="372"/>
    </location>
</feature>
<feature type="binding site" evidence="1">
    <location>
        <begin position="4"/>
        <end position="34"/>
    </location>
    <ligand>
        <name>FAD</name>
        <dbReference type="ChEBI" id="CHEBI:57692"/>
    </ligand>
</feature>
<feature type="modified residue" description="S-8alpha-FAD cysteine" evidence="1">
    <location>
        <position position="308"/>
    </location>
</feature>
<protein>
    <recommendedName>
        <fullName evidence="1">N-methyl-L-tryptophan oxidase</fullName>
        <shortName evidence="1">MTOX</shortName>
        <ecNumber evidence="1">1.5.3.-</ecNumber>
    </recommendedName>
</protein>
<gene>
    <name evidence="1" type="primary">solA</name>
    <name type="ordered locus">ECIAI39_2104</name>
</gene>
<evidence type="ECO:0000255" key="1">
    <source>
        <dbReference type="HAMAP-Rule" id="MF_00515"/>
    </source>
</evidence>
<accession>B7NL75</accession>
<reference key="1">
    <citation type="journal article" date="2009" name="PLoS Genet.">
        <title>Organised genome dynamics in the Escherichia coli species results in highly diverse adaptive paths.</title>
        <authorList>
            <person name="Touchon M."/>
            <person name="Hoede C."/>
            <person name="Tenaillon O."/>
            <person name="Barbe V."/>
            <person name="Baeriswyl S."/>
            <person name="Bidet P."/>
            <person name="Bingen E."/>
            <person name="Bonacorsi S."/>
            <person name="Bouchier C."/>
            <person name="Bouvet O."/>
            <person name="Calteau A."/>
            <person name="Chiapello H."/>
            <person name="Clermont O."/>
            <person name="Cruveiller S."/>
            <person name="Danchin A."/>
            <person name="Diard M."/>
            <person name="Dossat C."/>
            <person name="Karoui M.E."/>
            <person name="Frapy E."/>
            <person name="Garry L."/>
            <person name="Ghigo J.M."/>
            <person name="Gilles A.M."/>
            <person name="Johnson J."/>
            <person name="Le Bouguenec C."/>
            <person name="Lescat M."/>
            <person name="Mangenot S."/>
            <person name="Martinez-Jehanne V."/>
            <person name="Matic I."/>
            <person name="Nassif X."/>
            <person name="Oztas S."/>
            <person name="Petit M.A."/>
            <person name="Pichon C."/>
            <person name="Rouy Z."/>
            <person name="Ruf C.S."/>
            <person name="Schneider D."/>
            <person name="Tourret J."/>
            <person name="Vacherie B."/>
            <person name="Vallenet D."/>
            <person name="Medigue C."/>
            <person name="Rocha E.P.C."/>
            <person name="Denamur E."/>
        </authorList>
    </citation>
    <scope>NUCLEOTIDE SEQUENCE [LARGE SCALE GENOMIC DNA]</scope>
    <source>
        <strain>IAI39 / ExPEC</strain>
    </source>
</reference>
<name>MTOX_ECO7I</name>
<dbReference type="EC" id="1.5.3.-" evidence="1"/>
<dbReference type="EMBL" id="CU928164">
    <property type="protein sequence ID" value="CAR18231.1"/>
    <property type="molecule type" value="Genomic_DNA"/>
</dbReference>
<dbReference type="RefSeq" id="WP_000872789.1">
    <property type="nucleotide sequence ID" value="NC_011750.1"/>
</dbReference>
<dbReference type="RefSeq" id="YP_002408067.1">
    <property type="nucleotide sequence ID" value="NC_011750.1"/>
</dbReference>
<dbReference type="SMR" id="B7NL75"/>
<dbReference type="STRING" id="585057.ECIAI39_2104"/>
<dbReference type="KEGG" id="ect:ECIAI39_2104"/>
<dbReference type="PATRIC" id="fig|585057.6.peg.2186"/>
<dbReference type="HOGENOM" id="CLU_007884_2_1_6"/>
<dbReference type="Proteomes" id="UP000000749">
    <property type="component" value="Chromosome"/>
</dbReference>
<dbReference type="GO" id="GO:0005829">
    <property type="term" value="C:cytosol"/>
    <property type="evidence" value="ECO:0007669"/>
    <property type="project" value="TreeGrafter"/>
</dbReference>
<dbReference type="GO" id="GO:0050660">
    <property type="term" value="F:flavin adenine dinucleotide binding"/>
    <property type="evidence" value="ECO:0007669"/>
    <property type="project" value="InterPro"/>
</dbReference>
<dbReference type="GO" id="GO:0050131">
    <property type="term" value="F:N-methyl-L-amino-acid oxidase activity"/>
    <property type="evidence" value="ECO:0007669"/>
    <property type="project" value="InterPro"/>
</dbReference>
<dbReference type="GO" id="GO:0008115">
    <property type="term" value="F:sarcosine oxidase activity"/>
    <property type="evidence" value="ECO:0007669"/>
    <property type="project" value="TreeGrafter"/>
</dbReference>
<dbReference type="Gene3D" id="3.30.9.10">
    <property type="entry name" value="D-Amino Acid Oxidase, subunit A, domain 2"/>
    <property type="match status" value="1"/>
</dbReference>
<dbReference type="Gene3D" id="3.50.50.60">
    <property type="entry name" value="FAD/NAD(P)-binding domain"/>
    <property type="match status" value="1"/>
</dbReference>
<dbReference type="HAMAP" id="MF_00515">
    <property type="entry name" value="MTOX"/>
    <property type="match status" value="1"/>
</dbReference>
<dbReference type="InterPro" id="IPR006076">
    <property type="entry name" value="FAD-dep_OxRdtase"/>
</dbReference>
<dbReference type="InterPro" id="IPR036188">
    <property type="entry name" value="FAD/NAD-bd_sf"/>
</dbReference>
<dbReference type="InterPro" id="IPR023493">
    <property type="entry name" value="Me_Trp_Oxase_MTOX"/>
</dbReference>
<dbReference type="InterPro" id="IPR045170">
    <property type="entry name" value="MTOX"/>
</dbReference>
<dbReference type="NCBIfam" id="NF008425">
    <property type="entry name" value="PRK11259.1"/>
    <property type="match status" value="1"/>
</dbReference>
<dbReference type="PANTHER" id="PTHR10961:SF7">
    <property type="entry name" value="FAD DEPENDENT OXIDOREDUCTASE DOMAIN-CONTAINING PROTEIN"/>
    <property type="match status" value="1"/>
</dbReference>
<dbReference type="PANTHER" id="PTHR10961">
    <property type="entry name" value="PEROXISOMAL SARCOSINE OXIDASE"/>
    <property type="match status" value="1"/>
</dbReference>
<dbReference type="Pfam" id="PF01266">
    <property type="entry name" value="DAO"/>
    <property type="match status" value="1"/>
</dbReference>
<dbReference type="SUPFAM" id="SSF54373">
    <property type="entry name" value="FAD-linked reductases, C-terminal domain"/>
    <property type="match status" value="1"/>
</dbReference>
<dbReference type="SUPFAM" id="SSF51905">
    <property type="entry name" value="FAD/NAD(P)-binding domain"/>
    <property type="match status" value="1"/>
</dbReference>
<proteinExistence type="inferred from homology"/>
<comment type="function">
    <text evidence="1">Catalyzes the oxidative demethylation of N-methyl-L-tryptophan.</text>
</comment>
<comment type="catalytic activity">
    <reaction evidence="1">
        <text>N(alpha)-methyl-L-tryptophan + O2 + H2O = L-tryptophan + formaldehyde + H2O2</text>
        <dbReference type="Rhea" id="RHEA:28006"/>
        <dbReference type="ChEBI" id="CHEBI:15377"/>
        <dbReference type="ChEBI" id="CHEBI:15379"/>
        <dbReference type="ChEBI" id="CHEBI:16240"/>
        <dbReference type="ChEBI" id="CHEBI:16842"/>
        <dbReference type="ChEBI" id="CHEBI:57283"/>
        <dbReference type="ChEBI" id="CHEBI:57912"/>
    </reaction>
</comment>
<comment type="cofactor">
    <cofactor evidence="1">
        <name>FAD</name>
        <dbReference type="ChEBI" id="CHEBI:57692"/>
    </cofactor>
    <text evidence="1">Binds 1 FAD per subunit.</text>
</comment>
<comment type="subunit">
    <text evidence="1">Monomer.</text>
</comment>
<comment type="similarity">
    <text evidence="1">Belongs to the MSOX/MTOX family. MTOX subfamily.</text>
</comment>